<comment type="function">
    <text evidence="1">Lectin and alpha-amylase inhibitor. Acts as a defensive protein against insects (By similarity).</text>
</comment>
<comment type="developmental stage">
    <text>Germinating seedlings.</text>
</comment>
<comment type="similarity">
    <text evidence="2">Belongs to the leguminous lectin family.</text>
</comment>
<proteinExistence type="evidence at protein level"/>
<protein>
    <recommendedName>
        <fullName>Putative alpha-amylase inhibitor</fullName>
    </recommendedName>
</protein>
<dbReference type="GO" id="GO:0015066">
    <property type="term" value="F:alpha-amylase inhibitor activity"/>
    <property type="evidence" value="ECO:0007669"/>
    <property type="project" value="UniProtKB-KW"/>
</dbReference>
<dbReference type="GO" id="GO:0030246">
    <property type="term" value="F:carbohydrate binding"/>
    <property type="evidence" value="ECO:0007669"/>
    <property type="project" value="UniProtKB-KW"/>
</dbReference>
<accession>P81870</accession>
<keyword id="KW-0022">Alpha-amylase inhibitor</keyword>
<keyword id="KW-0903">Direct protein sequencing</keyword>
<keyword id="KW-0430">Lectin</keyword>
<name>LEAH_PHAVU</name>
<evidence type="ECO:0000250" key="1"/>
<evidence type="ECO:0000305" key="2"/>
<organism>
    <name type="scientific">Phaseolus vulgaris</name>
    <name type="common">Kidney bean</name>
    <name type="synonym">French bean</name>
    <dbReference type="NCBI Taxonomy" id="3885"/>
    <lineage>
        <taxon>Eukaryota</taxon>
        <taxon>Viridiplantae</taxon>
        <taxon>Streptophyta</taxon>
        <taxon>Embryophyta</taxon>
        <taxon>Tracheophyta</taxon>
        <taxon>Spermatophyta</taxon>
        <taxon>Magnoliopsida</taxon>
        <taxon>eudicotyledons</taxon>
        <taxon>Gunneridae</taxon>
        <taxon>Pentapetalae</taxon>
        <taxon>rosids</taxon>
        <taxon>fabids</taxon>
        <taxon>Fabales</taxon>
        <taxon>Fabaceae</taxon>
        <taxon>Papilionoideae</taxon>
        <taxon>50 kb inversion clade</taxon>
        <taxon>NPAAA clade</taxon>
        <taxon>indigoferoid/millettioid clade</taxon>
        <taxon>Phaseoleae</taxon>
        <taxon>Phaseolus</taxon>
    </lineage>
</organism>
<sequence>XXXGLXIVDAFVQPNLILQGDAKVEDNGXL</sequence>
<reference key="1">
    <citation type="submission" date="1999-05" db="UniProtKB">
        <authorList>
            <person name="Froese C.D."/>
            <person name="Nowack L.M."/>
            <person name="Thompson J.E."/>
        </authorList>
    </citation>
    <scope>PROTEIN SEQUENCE</scope>
    <source>
        <strain>cv. Kinghorn</strain>
        <tissue>Cotyledon</tissue>
    </source>
</reference>
<feature type="chain" id="PRO_0000105110" description="Putative alpha-amylase inhibitor">
    <location>
        <begin position="1"/>
        <end position="30" status="greater than"/>
    </location>
</feature>
<feature type="non-terminal residue">
    <location>
        <position position="30"/>
    </location>
</feature>